<name>NPD1_GEOKA</name>
<accession>Q5L014</accession>
<reference key="1">
    <citation type="journal article" date="2004" name="Nucleic Acids Res.">
        <title>Thermoadaptation trait revealed by the genome sequence of thermophilic Geobacillus kaustophilus.</title>
        <authorList>
            <person name="Takami H."/>
            <person name="Takaki Y."/>
            <person name="Chee G.-J."/>
            <person name="Nishi S."/>
            <person name="Shimamura S."/>
            <person name="Suzuki H."/>
            <person name="Matsui S."/>
            <person name="Uchiyama I."/>
        </authorList>
    </citation>
    <scope>NUCLEOTIDE SEQUENCE [LARGE SCALE GENOMIC DNA]</scope>
    <source>
        <strain>HTA426</strain>
    </source>
</reference>
<keyword id="KW-0963">Cytoplasm</keyword>
<keyword id="KW-0479">Metal-binding</keyword>
<keyword id="KW-0520">NAD</keyword>
<keyword id="KW-1185">Reference proteome</keyword>
<keyword id="KW-0808">Transferase</keyword>
<keyword id="KW-0862">Zinc</keyword>
<feature type="chain" id="PRO_0000110317" description="NAD-dependent protein deacetylase 1">
    <location>
        <begin position="1"/>
        <end position="242"/>
    </location>
</feature>
<feature type="domain" description="Deacetylase sirtuin-type" evidence="2">
    <location>
        <begin position="1"/>
        <end position="242"/>
    </location>
</feature>
<feature type="active site" description="Proton acceptor" evidence="2">
    <location>
        <position position="115"/>
    </location>
</feature>
<feature type="binding site" evidence="1">
    <location>
        <position position="19"/>
    </location>
    <ligand>
        <name>NAD(+)</name>
        <dbReference type="ChEBI" id="CHEBI:57540"/>
    </ligand>
</feature>
<feature type="binding site" evidence="1">
    <location>
        <position position="23"/>
    </location>
    <ligand>
        <name>NAD(+)</name>
        <dbReference type="ChEBI" id="CHEBI:57540"/>
    </ligand>
</feature>
<feature type="binding site" evidence="1">
    <location>
        <position position="30"/>
    </location>
    <ligand>
        <name>NAD(+)</name>
        <dbReference type="ChEBI" id="CHEBI:57540"/>
    </ligand>
</feature>
<feature type="binding site" evidence="1">
    <location>
        <position position="30"/>
    </location>
    <ligand>
        <name>nicotinamide</name>
        <dbReference type="ChEBI" id="CHEBI:17154"/>
    </ligand>
</feature>
<feature type="binding site" evidence="1">
    <location>
        <position position="31"/>
    </location>
    <ligand>
        <name>NAD(+)</name>
        <dbReference type="ChEBI" id="CHEBI:57540"/>
    </ligand>
</feature>
<feature type="binding site" evidence="1">
    <location>
        <position position="97"/>
    </location>
    <ligand>
        <name>NAD(+)</name>
        <dbReference type="ChEBI" id="CHEBI:57540"/>
    </ligand>
</feature>
<feature type="binding site" evidence="1">
    <location>
        <position position="99"/>
    </location>
    <ligand>
        <name>NAD(+)</name>
        <dbReference type="ChEBI" id="CHEBI:57540"/>
    </ligand>
</feature>
<feature type="binding site" evidence="1">
    <location>
        <position position="99"/>
    </location>
    <ligand>
        <name>nicotinamide</name>
        <dbReference type="ChEBI" id="CHEBI:17154"/>
    </ligand>
</feature>
<feature type="binding site" evidence="1">
    <location>
        <position position="100"/>
    </location>
    <ligand>
        <name>NAD(+)</name>
        <dbReference type="ChEBI" id="CHEBI:57540"/>
    </ligand>
</feature>
<feature type="binding site" evidence="1">
    <location>
        <position position="100"/>
    </location>
    <ligand>
        <name>nicotinamide</name>
        <dbReference type="ChEBI" id="CHEBI:17154"/>
    </ligand>
</feature>
<feature type="binding site" evidence="1">
    <location>
        <position position="115"/>
    </location>
    <ligand>
        <name>NAD(+)</name>
        <dbReference type="ChEBI" id="CHEBI:57540"/>
    </ligand>
</feature>
<feature type="binding site" evidence="1">
    <location>
        <position position="123"/>
    </location>
    <ligand>
        <name>Zn(2+)</name>
        <dbReference type="ChEBI" id="CHEBI:29105"/>
    </ligand>
</feature>
<feature type="binding site" evidence="1">
    <location>
        <position position="126"/>
    </location>
    <ligand>
        <name>Zn(2+)</name>
        <dbReference type="ChEBI" id="CHEBI:29105"/>
    </ligand>
</feature>
<feature type="binding site" evidence="1">
    <location>
        <position position="142"/>
    </location>
    <ligand>
        <name>Zn(2+)</name>
        <dbReference type="ChEBI" id="CHEBI:29105"/>
    </ligand>
</feature>
<feature type="binding site" evidence="1">
    <location>
        <position position="144"/>
    </location>
    <ligand>
        <name>Zn(2+)</name>
        <dbReference type="ChEBI" id="CHEBI:29105"/>
    </ligand>
</feature>
<feature type="binding site" evidence="1">
    <location>
        <position position="182"/>
    </location>
    <ligand>
        <name>NAD(+)</name>
        <dbReference type="ChEBI" id="CHEBI:57540"/>
    </ligand>
</feature>
<feature type="binding site" evidence="1">
    <location>
        <position position="183"/>
    </location>
    <ligand>
        <name>NAD(+)</name>
        <dbReference type="ChEBI" id="CHEBI:57540"/>
    </ligand>
</feature>
<feature type="binding site" evidence="1">
    <location>
        <position position="207"/>
    </location>
    <ligand>
        <name>NAD(+)</name>
        <dbReference type="ChEBI" id="CHEBI:57540"/>
    </ligand>
</feature>
<feature type="binding site" evidence="1">
    <location>
        <position position="226"/>
    </location>
    <ligand>
        <name>NAD(+)</name>
        <dbReference type="ChEBI" id="CHEBI:57540"/>
    </ligand>
</feature>
<organism>
    <name type="scientific">Geobacillus kaustophilus (strain HTA426)</name>
    <dbReference type="NCBI Taxonomy" id="235909"/>
    <lineage>
        <taxon>Bacteria</taxon>
        <taxon>Bacillati</taxon>
        <taxon>Bacillota</taxon>
        <taxon>Bacilli</taxon>
        <taxon>Bacillales</taxon>
        <taxon>Anoxybacillaceae</taxon>
        <taxon>Geobacillus</taxon>
        <taxon>Geobacillus thermoleovorans group</taxon>
    </lineage>
</organism>
<evidence type="ECO:0000255" key="1">
    <source>
        <dbReference type="HAMAP-Rule" id="MF_01968"/>
    </source>
</evidence>
<evidence type="ECO:0000255" key="2">
    <source>
        <dbReference type="PROSITE-ProRule" id="PRU00236"/>
    </source>
</evidence>
<dbReference type="EC" id="2.3.1.286" evidence="1 2"/>
<dbReference type="EMBL" id="BA000043">
    <property type="protein sequence ID" value="BAD75722.1"/>
    <property type="molecule type" value="Genomic_DNA"/>
</dbReference>
<dbReference type="RefSeq" id="WP_011230933.1">
    <property type="nucleotide sequence ID" value="NC_006510.1"/>
</dbReference>
<dbReference type="SMR" id="Q5L014"/>
<dbReference type="STRING" id="235909.GK1437"/>
<dbReference type="KEGG" id="gka:GK1437"/>
<dbReference type="eggNOG" id="COG0846">
    <property type="taxonomic scope" value="Bacteria"/>
</dbReference>
<dbReference type="HOGENOM" id="CLU_023643_3_1_9"/>
<dbReference type="Proteomes" id="UP000001172">
    <property type="component" value="Chromosome"/>
</dbReference>
<dbReference type="GO" id="GO:0005737">
    <property type="term" value="C:cytoplasm"/>
    <property type="evidence" value="ECO:0007669"/>
    <property type="project" value="UniProtKB-SubCell"/>
</dbReference>
<dbReference type="GO" id="GO:0017136">
    <property type="term" value="F:histone deacetylase activity, NAD-dependent"/>
    <property type="evidence" value="ECO:0007669"/>
    <property type="project" value="TreeGrafter"/>
</dbReference>
<dbReference type="GO" id="GO:0070403">
    <property type="term" value="F:NAD+ binding"/>
    <property type="evidence" value="ECO:0007669"/>
    <property type="project" value="UniProtKB-UniRule"/>
</dbReference>
<dbReference type="GO" id="GO:0008270">
    <property type="term" value="F:zinc ion binding"/>
    <property type="evidence" value="ECO:0007669"/>
    <property type="project" value="UniProtKB-UniRule"/>
</dbReference>
<dbReference type="Gene3D" id="3.30.1600.10">
    <property type="entry name" value="SIR2/SIRT2 'Small Domain"/>
    <property type="match status" value="1"/>
</dbReference>
<dbReference type="Gene3D" id="3.40.50.1220">
    <property type="entry name" value="TPP-binding domain"/>
    <property type="match status" value="1"/>
</dbReference>
<dbReference type="HAMAP" id="MF_01968">
    <property type="entry name" value="Sirtuin_ClassU"/>
    <property type="match status" value="1"/>
</dbReference>
<dbReference type="InterPro" id="IPR029035">
    <property type="entry name" value="DHS-like_NAD/FAD-binding_dom"/>
</dbReference>
<dbReference type="InterPro" id="IPR050134">
    <property type="entry name" value="NAD-dep_sirtuin_deacylases"/>
</dbReference>
<dbReference type="InterPro" id="IPR003000">
    <property type="entry name" value="Sirtuin"/>
</dbReference>
<dbReference type="InterPro" id="IPR026591">
    <property type="entry name" value="Sirtuin_cat_small_dom_sf"/>
</dbReference>
<dbReference type="InterPro" id="IPR028628">
    <property type="entry name" value="Sirtuin_class_U"/>
</dbReference>
<dbReference type="InterPro" id="IPR026590">
    <property type="entry name" value="Ssirtuin_cat_dom"/>
</dbReference>
<dbReference type="NCBIfam" id="NF001753">
    <property type="entry name" value="PRK00481.1-3"/>
    <property type="match status" value="1"/>
</dbReference>
<dbReference type="PANTHER" id="PTHR11085">
    <property type="entry name" value="NAD-DEPENDENT PROTEIN DEACYLASE SIRTUIN-5, MITOCHONDRIAL-RELATED"/>
    <property type="match status" value="1"/>
</dbReference>
<dbReference type="PANTHER" id="PTHR11085:SF10">
    <property type="entry name" value="NAD-DEPENDENT PROTEIN DEACYLASE SIRTUIN-5, MITOCHONDRIAL-RELATED"/>
    <property type="match status" value="1"/>
</dbReference>
<dbReference type="Pfam" id="PF02146">
    <property type="entry name" value="SIR2"/>
    <property type="match status" value="1"/>
</dbReference>
<dbReference type="SUPFAM" id="SSF52467">
    <property type="entry name" value="DHS-like NAD/FAD-binding domain"/>
    <property type="match status" value="1"/>
</dbReference>
<dbReference type="PROSITE" id="PS50305">
    <property type="entry name" value="SIRTUIN"/>
    <property type="match status" value="1"/>
</dbReference>
<proteinExistence type="inferred from homology"/>
<comment type="function">
    <text evidence="1">NAD-dependent protein deacetylase which modulates the activities of several enzymes which are inactive in their acetylated form.</text>
</comment>
<comment type="catalytic activity">
    <reaction evidence="1">
        <text>N(6)-acetyl-L-lysyl-[protein] + NAD(+) + H2O = 2''-O-acetyl-ADP-D-ribose + nicotinamide + L-lysyl-[protein]</text>
        <dbReference type="Rhea" id="RHEA:43636"/>
        <dbReference type="Rhea" id="RHEA-COMP:9752"/>
        <dbReference type="Rhea" id="RHEA-COMP:10731"/>
        <dbReference type="ChEBI" id="CHEBI:15377"/>
        <dbReference type="ChEBI" id="CHEBI:17154"/>
        <dbReference type="ChEBI" id="CHEBI:29969"/>
        <dbReference type="ChEBI" id="CHEBI:57540"/>
        <dbReference type="ChEBI" id="CHEBI:61930"/>
        <dbReference type="ChEBI" id="CHEBI:83767"/>
        <dbReference type="EC" id="2.3.1.286"/>
    </reaction>
</comment>
<comment type="cofactor">
    <cofactor evidence="1">
        <name>Zn(2+)</name>
        <dbReference type="ChEBI" id="CHEBI:29105"/>
    </cofactor>
    <text evidence="1">Binds 1 zinc ion per subunit.</text>
</comment>
<comment type="subcellular location">
    <subcellularLocation>
        <location evidence="1">Cytoplasm</location>
    </subcellularLocation>
</comment>
<comment type="similarity">
    <text evidence="1">Belongs to the sirtuin family. Class U subfamily.</text>
</comment>
<gene>
    <name evidence="1" type="primary">cobB1</name>
    <name type="ordered locus">GK1437</name>
</gene>
<protein>
    <recommendedName>
        <fullName evidence="1">NAD-dependent protein deacetylase 1</fullName>
        <ecNumber evidence="1 2">2.3.1.286</ecNumber>
    </recommendedName>
    <alternativeName>
        <fullName evidence="1">Regulatory protein SIR2 homolog 1</fullName>
    </alternativeName>
</protein>
<sequence>MTITSWLAASRHTVVLTGAGMSTESGLPDFRSPRTGLWARFNPSELATIDALYHRRESFVEFYQYRIRTLQQCQPHDGHRLLADWERRGIVQTIVTQNVDGFHQEAGSRRVIELHGSLRTVHCQRCGESKPSFVYLHGVLTCECGGVLRPSVVLFGEPLPEKAITEAWEAAQQADLFLVLGSSLQVSPANQLPLVAKRNGAKLVIINWEPTELDDLADAVIHQRKIGEVLNELNEQLAEVDP</sequence>